<accession>B4SYX3</accession>
<proteinExistence type="inferred from homology"/>
<comment type="function">
    <text evidence="1">Catalyzes the transfer of the L-Ara4N moiety of the glycolipid undecaprenyl phosphate-alpha-L-Ara4N to lipid A. The modified arabinose is attached to lipid A and is required for resistance to polymyxin and cationic antimicrobial peptides.</text>
</comment>
<comment type="catalytic activity">
    <reaction evidence="1">
        <text>4-amino-4-deoxy-alpha-L-arabinopyranosyl di-trans,octa-cis-undecaprenyl phosphate + lipid IVA = lipid IIA + di-trans,octa-cis-undecaprenyl phosphate.</text>
        <dbReference type="EC" id="2.4.2.43"/>
    </reaction>
</comment>
<comment type="pathway">
    <text evidence="1">Lipopolysaccharide metabolism; 4-amino-4-deoxy-beta-L-arabinose-lipid A biosynthesis.</text>
</comment>
<comment type="subcellular location">
    <subcellularLocation>
        <location evidence="1">Cell inner membrane</location>
        <topology evidence="1">Multi-pass membrane protein</topology>
    </subcellularLocation>
</comment>
<comment type="similarity">
    <text evidence="1">Belongs to the glycosyltransferase 83 family.</text>
</comment>
<gene>
    <name evidence="1" type="primary">arnT</name>
    <name type="ordered locus">SNSL254_A2486</name>
</gene>
<reference key="1">
    <citation type="journal article" date="2011" name="J. Bacteriol.">
        <title>Comparative genomics of 28 Salmonella enterica isolates: evidence for CRISPR-mediated adaptive sublineage evolution.</title>
        <authorList>
            <person name="Fricke W.F."/>
            <person name="Mammel M.K."/>
            <person name="McDermott P.F."/>
            <person name="Tartera C."/>
            <person name="White D.G."/>
            <person name="Leclerc J.E."/>
            <person name="Ravel J."/>
            <person name="Cebula T.A."/>
        </authorList>
    </citation>
    <scope>NUCLEOTIDE SEQUENCE [LARGE SCALE GENOMIC DNA]</scope>
    <source>
        <strain>SL254</strain>
    </source>
</reference>
<dbReference type="EC" id="2.4.2.43" evidence="1"/>
<dbReference type="EMBL" id="CP001113">
    <property type="protein sequence ID" value="ACF64169.1"/>
    <property type="molecule type" value="Genomic_DNA"/>
</dbReference>
<dbReference type="RefSeq" id="WP_000978062.1">
    <property type="nucleotide sequence ID" value="NZ_CCMR01000001.1"/>
</dbReference>
<dbReference type="SMR" id="B4SYX3"/>
<dbReference type="CAZy" id="GT83">
    <property type="family name" value="Glycosyltransferase Family 83"/>
</dbReference>
<dbReference type="KEGG" id="see:SNSL254_A2486"/>
<dbReference type="HOGENOM" id="CLU_019200_2_1_6"/>
<dbReference type="UniPathway" id="UPA00037"/>
<dbReference type="Proteomes" id="UP000008824">
    <property type="component" value="Chromosome"/>
</dbReference>
<dbReference type="GO" id="GO:0005886">
    <property type="term" value="C:plasma membrane"/>
    <property type="evidence" value="ECO:0007669"/>
    <property type="project" value="UniProtKB-SubCell"/>
</dbReference>
<dbReference type="GO" id="GO:0103015">
    <property type="term" value="F:4-amino-4-deoxy-L-arabinose transferase activity"/>
    <property type="evidence" value="ECO:0007669"/>
    <property type="project" value="UniProtKB-EC"/>
</dbReference>
<dbReference type="GO" id="GO:0000030">
    <property type="term" value="F:mannosyltransferase activity"/>
    <property type="evidence" value="ECO:0007669"/>
    <property type="project" value="InterPro"/>
</dbReference>
<dbReference type="GO" id="GO:0009245">
    <property type="term" value="P:lipid A biosynthetic process"/>
    <property type="evidence" value="ECO:0007669"/>
    <property type="project" value="UniProtKB-UniRule"/>
</dbReference>
<dbReference type="GO" id="GO:0009103">
    <property type="term" value="P:lipopolysaccharide biosynthetic process"/>
    <property type="evidence" value="ECO:0007669"/>
    <property type="project" value="UniProtKB-KW"/>
</dbReference>
<dbReference type="GO" id="GO:0006493">
    <property type="term" value="P:protein O-linked glycosylation"/>
    <property type="evidence" value="ECO:0007669"/>
    <property type="project" value="InterPro"/>
</dbReference>
<dbReference type="GO" id="GO:0010041">
    <property type="term" value="P:response to iron(III) ion"/>
    <property type="evidence" value="ECO:0007669"/>
    <property type="project" value="TreeGrafter"/>
</dbReference>
<dbReference type="HAMAP" id="MF_01165">
    <property type="entry name" value="ArnT_transfer"/>
    <property type="match status" value="1"/>
</dbReference>
<dbReference type="InterPro" id="IPR022839">
    <property type="entry name" value="ArnT_tfrase"/>
</dbReference>
<dbReference type="InterPro" id="IPR003342">
    <property type="entry name" value="Glyco_trans_39/83"/>
</dbReference>
<dbReference type="InterPro" id="IPR050297">
    <property type="entry name" value="LipidA_mod_glycosyltrf_83"/>
</dbReference>
<dbReference type="NCBIfam" id="NF009784">
    <property type="entry name" value="PRK13279.1"/>
    <property type="match status" value="1"/>
</dbReference>
<dbReference type="PANTHER" id="PTHR33908">
    <property type="entry name" value="MANNOSYLTRANSFERASE YKCB-RELATED"/>
    <property type="match status" value="1"/>
</dbReference>
<dbReference type="PANTHER" id="PTHR33908:SF3">
    <property type="entry name" value="UNDECAPRENYL PHOSPHATE-ALPHA-4-AMINO-4-DEOXY-L-ARABINOSE ARABINOSYL TRANSFERASE"/>
    <property type="match status" value="1"/>
</dbReference>
<dbReference type="Pfam" id="PF02366">
    <property type="entry name" value="PMT"/>
    <property type="match status" value="1"/>
</dbReference>
<organism>
    <name type="scientific">Salmonella newport (strain SL254)</name>
    <dbReference type="NCBI Taxonomy" id="423368"/>
    <lineage>
        <taxon>Bacteria</taxon>
        <taxon>Pseudomonadati</taxon>
        <taxon>Pseudomonadota</taxon>
        <taxon>Gammaproteobacteria</taxon>
        <taxon>Enterobacterales</taxon>
        <taxon>Enterobacteriaceae</taxon>
        <taxon>Salmonella</taxon>
    </lineage>
</organism>
<evidence type="ECO:0000255" key="1">
    <source>
        <dbReference type="HAMAP-Rule" id="MF_01165"/>
    </source>
</evidence>
<sequence>MMKSIRYYLAFAAFIALYYVIPVNSRLLWQPDETRYAEISREMLVSGDWIVPHFLGLRYFEKPIAGYWINSLGQWLFGATNFGVRAGAILTTLLAAALVAWLTFRLWRDKRTALLASVIFLSLFAVYSIGTYAVLDPMIALWLTAGMCCFWQGMQATTRTGKIGMFLLLGATCGLGVLTKGFLALAVPVVSVLPWVIVQKRWKDFLLYGWLAVLSCFVVVLPWAIAIARREADFWHYFFWVEHIQRFAMSDAQHKAPFWYYLPVLLAGSLPWLGLLPGALKLGWHERNGAFYLLGWTIMPLLFFSIAKGKLPTYVLSCFAPIAILMARFVLHNVKEGVAALRVNGGINLVFGIIGIVAAFVVSSWGPLKSPVWTHIETYKVFCVWGVFTVWAFVGWYSLCHSPKYLLPAFCPLGLALLFGFSVPDRVMESKQPQFFVEMTQAPLASSRYILADSVGVAAGLAWSLKRDDIMLYGHAGELRYGLSYPDVQNKFVKADDFNAWLNQHRQEGIITLVLSIDKDEDISALSLPPADNVDYQGRLVLIQYRPK</sequence>
<feature type="chain" id="PRO_0000380030" description="Undecaprenyl phosphate-alpha-4-amino-4-deoxy-L-arabinose arabinosyl transferase">
    <location>
        <begin position="1"/>
        <end position="548"/>
    </location>
</feature>
<feature type="transmembrane region" description="Helical" evidence="1">
    <location>
        <begin position="9"/>
        <end position="29"/>
    </location>
</feature>
<feature type="transmembrane region" description="Helical" evidence="1">
    <location>
        <begin position="82"/>
        <end position="102"/>
    </location>
</feature>
<feature type="transmembrane region" description="Helical" evidence="1">
    <location>
        <begin position="114"/>
        <end position="134"/>
    </location>
</feature>
<feature type="transmembrane region" description="Helical" evidence="1">
    <location>
        <begin position="137"/>
        <end position="157"/>
    </location>
</feature>
<feature type="transmembrane region" description="Helical" evidence="1">
    <location>
        <begin position="163"/>
        <end position="185"/>
    </location>
</feature>
<feature type="transmembrane region" description="Helical" evidence="1">
    <location>
        <begin position="205"/>
        <end position="225"/>
    </location>
</feature>
<feature type="transmembrane region" description="Helical" evidence="1">
    <location>
        <begin position="256"/>
        <end position="276"/>
    </location>
</feature>
<feature type="transmembrane region" description="Helical" evidence="1">
    <location>
        <begin position="289"/>
        <end position="309"/>
    </location>
</feature>
<feature type="transmembrane region" description="Helical" evidence="1">
    <location>
        <begin position="311"/>
        <end position="331"/>
    </location>
</feature>
<feature type="transmembrane region" description="Helical" evidence="1">
    <location>
        <begin position="345"/>
        <end position="365"/>
    </location>
</feature>
<feature type="transmembrane region" description="Helical" evidence="1">
    <location>
        <begin position="381"/>
        <end position="401"/>
    </location>
</feature>
<feature type="transmembrane region" description="Helical" evidence="1">
    <location>
        <begin position="405"/>
        <end position="425"/>
    </location>
</feature>
<keyword id="KW-0997">Cell inner membrane</keyword>
<keyword id="KW-1003">Cell membrane</keyword>
<keyword id="KW-0328">Glycosyltransferase</keyword>
<keyword id="KW-0441">Lipid A biosynthesis</keyword>
<keyword id="KW-0444">Lipid biosynthesis</keyword>
<keyword id="KW-0443">Lipid metabolism</keyword>
<keyword id="KW-0448">Lipopolysaccharide biosynthesis</keyword>
<keyword id="KW-0472">Membrane</keyword>
<keyword id="KW-0808">Transferase</keyword>
<keyword id="KW-0812">Transmembrane</keyword>
<keyword id="KW-1133">Transmembrane helix</keyword>
<protein>
    <recommendedName>
        <fullName evidence="1">Undecaprenyl phosphate-alpha-4-amino-4-deoxy-L-arabinose arabinosyl transferase</fullName>
        <ecNumber evidence="1">2.4.2.43</ecNumber>
    </recommendedName>
    <alternativeName>
        <fullName evidence="1">4-amino-4-deoxy-L-arabinose lipid A transferase</fullName>
    </alternativeName>
    <alternativeName>
        <fullName evidence="1">Lipid IV(A) 4-amino-4-deoxy-L-arabinosyltransferase</fullName>
    </alternativeName>
    <alternativeName>
        <fullName evidence="1">Undecaprenyl phosphate-alpha-L-Ara4N transferase</fullName>
    </alternativeName>
</protein>
<name>ARNT_SALNS</name>